<protein>
    <recommendedName>
        <fullName>Ras-related protein Rab-7a</fullName>
        <ecNumber evidence="2">3.6.5.2</ecNumber>
    </recommendedName>
    <alternativeName>
        <fullName>Ras-related protein BRL-RAS</fullName>
    </alternativeName>
    <alternativeName>
        <fullName>Ras-related protein p23</fullName>
    </alternativeName>
</protein>
<reference key="1">
    <citation type="journal article" date="1988" name="Nucleic Acids Res.">
        <title>A new member of the ras gene superfamily identified in a rat liver cell line.</title>
        <authorList>
            <person name="Bucci C."/>
            <person name="Franzio R."/>
            <person name="Chiariotti L."/>
            <person name="Brown A.L."/>
            <person name="Rechler M.M."/>
            <person name="Bruni C.B."/>
        </authorList>
    </citation>
    <scope>NUCLEOTIDE SEQUENCE [MRNA]</scope>
    <source>
        <strain>Buffalo</strain>
        <tissue>Liver</tissue>
    </source>
</reference>
<reference key="2">
    <citation type="submission" date="1994-06" db="EMBL/GenBank/DDBJ databases">
        <authorList>
            <person name="Bruni C.B."/>
        </authorList>
    </citation>
    <scope>SEQUENCE REVISION TO N-TERMINUS</scope>
</reference>
<reference key="3">
    <citation type="submission" date="2000-07" db="EMBL/GenBank/DDBJ databases">
        <authorList>
            <person name="Zhao H."/>
            <person name="Gao L."/>
            <person name="Vaananen K.H."/>
        </authorList>
    </citation>
    <scope>NUCLEOTIDE SEQUENCE [MRNA]</scope>
    <source>
        <strain>Sprague-Dawley</strain>
        <tissue>Bone</tissue>
    </source>
</reference>
<reference key="4">
    <citation type="journal article" date="2005" name="Genomics">
        <title>Fine mapping of radiation susceptibility and gene expression analysis of LEC congenic rat lines.</title>
        <authorList>
            <person name="Tsuji A.B."/>
            <person name="Sugyo A."/>
            <person name="Ogiu T."/>
            <person name="Sagara M."/>
            <person name="Kimura T."/>
            <person name="Ishikawa A."/>
            <person name="Sudo H."/>
            <person name="Ohtsuki M."/>
            <person name="Aburatani H."/>
            <person name="Imai T."/>
            <person name="Harada Y.N."/>
        </authorList>
    </citation>
    <scope>NUCLEOTIDE SEQUENCE [MRNA]</scope>
    <source>
        <strain>Fischer 344/DuCrj</strain>
        <strain>LEC/Crj</strain>
    </source>
</reference>
<reference key="5">
    <citation type="journal article" date="2004" name="Genome Res.">
        <title>The status, quality, and expansion of the NIH full-length cDNA project: the Mammalian Gene Collection (MGC).</title>
        <authorList>
            <consortium name="The MGC Project Team"/>
        </authorList>
    </citation>
    <scope>NUCLEOTIDE SEQUENCE [LARGE SCALE MRNA]</scope>
    <source>
        <tissue>Lung</tissue>
    </source>
</reference>
<reference key="6">
    <citation type="journal article" date="2005" name="J. Biol. Chem.">
        <title>Possible role of direct Rac1-Rab7 interaction in ruffled border formation of osteoclasts.</title>
        <authorList>
            <person name="Sun Y."/>
            <person name="Bueki K.G."/>
            <person name="Ettala O."/>
            <person name="Vaeaeraeniemi J.P."/>
            <person name="Vaeaenaenen H.K."/>
        </authorList>
    </citation>
    <scope>FUNCTION</scope>
    <scope>SUBCELLULAR LOCATION</scope>
    <scope>TISSUE SPECIFICITY</scope>
    <scope>INTERACTION WITH RAC1</scope>
</reference>
<reference key="7">
    <citation type="journal article" date="2005" name="J. Neurosci.">
        <title>The small GTPase Rab7 controls the endosomal trafficking and neuritogenic signaling of the nerve growth factor receptor TrkA.</title>
        <authorList>
            <person name="Saxena S."/>
            <person name="Bucci C."/>
            <person name="Weis J."/>
            <person name="Kruttgen A."/>
        </authorList>
    </citation>
    <scope>FUNCTION</scope>
    <scope>INTERACTION WITH NTRK1/TRKA</scope>
    <scope>TISSUE SPECIFICITY</scope>
</reference>
<reference key="8">
    <citation type="journal article" date="2008" name="EMBO J.">
        <title>Structures of RabGGTase-substrate/product complexes provide insights into the evolution of protein prenylation.</title>
        <authorList>
            <person name="Guo Z."/>
            <person name="Wu Y.W."/>
            <person name="Das D."/>
            <person name="Delon C."/>
            <person name="Cramer J."/>
            <person name="Yu S."/>
            <person name="Thuns S."/>
            <person name="Lupilova N."/>
            <person name="Waldmann H."/>
            <person name="Brunsveld L."/>
            <person name="Goody R.S."/>
            <person name="Alexandrov K."/>
            <person name="Blankenfeldt W."/>
        </authorList>
    </citation>
    <scope>SUBUNIT</scope>
    <scope>INTERACTION WITH CHM</scope>
</reference>
<reference key="9">
    <citation type="journal article" date="2012" name="Nat. Commun.">
        <title>Quantitative maps of protein phosphorylation sites across 14 different rat organs and tissues.</title>
        <authorList>
            <person name="Lundby A."/>
            <person name="Secher A."/>
            <person name="Lage K."/>
            <person name="Nordsborg N.B."/>
            <person name="Dmytriyev A."/>
            <person name="Lundby C."/>
            <person name="Olsen J.V."/>
        </authorList>
    </citation>
    <scope>PHOSPHORYLATION [LARGE SCALE ANALYSIS] AT SER-72</scope>
    <scope>IDENTIFICATION BY MASS SPECTROMETRY [LARGE SCALE ANALYSIS]</scope>
</reference>
<reference key="10">
    <citation type="journal article" date="2004" name="Cell">
        <title>Structure of the Rab7:REP-1 complex: insights into the mechanism of Rab prenylation and choroideremia disease.</title>
        <authorList>
            <person name="Rak A."/>
            <person name="Pylypenko O."/>
            <person name="Niculae A."/>
            <person name="Pyatkov K."/>
            <person name="Goody R.S."/>
            <person name="Alexandrov K."/>
        </authorList>
    </citation>
    <scope>X-RAY CRYSTALLOGRAPHY (1.70 ANGSTROMS) OF 1-185 IN COMPLEX WITH GTP ANALOG AND CHM</scope>
</reference>
<dbReference type="EC" id="3.6.5.2" evidence="2"/>
<dbReference type="EMBL" id="X12535">
    <property type="protein sequence ID" value="CAA31053.1"/>
    <property type="molecule type" value="mRNA"/>
</dbReference>
<dbReference type="EMBL" id="AF286535">
    <property type="protein sequence ID" value="AAG00543.1"/>
    <property type="molecule type" value="mRNA"/>
</dbReference>
<dbReference type="EMBL" id="AB158427">
    <property type="protein sequence ID" value="BAE16999.1"/>
    <property type="molecule type" value="mRNA"/>
</dbReference>
<dbReference type="EMBL" id="AB158428">
    <property type="protein sequence ID" value="BAE17000.1"/>
    <property type="molecule type" value="mRNA"/>
</dbReference>
<dbReference type="EMBL" id="BC072470">
    <property type="protein sequence ID" value="AAH72470.1"/>
    <property type="molecule type" value="mRNA"/>
</dbReference>
<dbReference type="PIR" id="S01934">
    <property type="entry name" value="S01934"/>
</dbReference>
<dbReference type="RefSeq" id="NP_076440.1">
    <property type="nucleotide sequence ID" value="NM_023950.4"/>
</dbReference>
<dbReference type="RefSeq" id="XP_006236911.1">
    <property type="nucleotide sequence ID" value="XM_006236849.5"/>
</dbReference>
<dbReference type="PDB" id="1VG0">
    <property type="method" value="X-ray"/>
    <property type="resolution" value="2.20 A"/>
    <property type="chains" value="B=1-207"/>
</dbReference>
<dbReference type="PDB" id="1VG1">
    <property type="method" value="X-ray"/>
    <property type="resolution" value="1.90 A"/>
    <property type="chains" value="A=1-185"/>
</dbReference>
<dbReference type="PDB" id="1VG8">
    <property type="method" value="X-ray"/>
    <property type="resolution" value="1.70 A"/>
    <property type="chains" value="A/B/C/D=1-207"/>
</dbReference>
<dbReference type="PDB" id="1VG9">
    <property type="method" value="X-ray"/>
    <property type="resolution" value="2.50 A"/>
    <property type="chains" value="B/D/F/H=1-185"/>
</dbReference>
<dbReference type="PDBsum" id="1VG0"/>
<dbReference type="PDBsum" id="1VG1"/>
<dbReference type="PDBsum" id="1VG8"/>
<dbReference type="PDBsum" id="1VG9"/>
<dbReference type="SMR" id="P09527"/>
<dbReference type="BioGRID" id="248093">
    <property type="interactions" value="5"/>
</dbReference>
<dbReference type="FunCoup" id="P09527">
    <property type="interactions" value="3630"/>
</dbReference>
<dbReference type="IntAct" id="P09527">
    <property type="interactions" value="10"/>
</dbReference>
<dbReference type="MINT" id="P09527"/>
<dbReference type="STRING" id="10116.ENSRNOP00000016432"/>
<dbReference type="iPTMnet" id="P09527"/>
<dbReference type="PhosphoSitePlus" id="P09527"/>
<dbReference type="SwissPalm" id="P09527"/>
<dbReference type="jPOST" id="P09527"/>
<dbReference type="PaxDb" id="10116-ENSRNOP00000016432"/>
<dbReference type="Ensembl" id="ENSRNOT00000016432.7">
    <property type="protein sequence ID" value="ENSRNOP00000016432.3"/>
    <property type="gene ID" value="ENSRNOG00000012247.7"/>
</dbReference>
<dbReference type="GeneID" id="29448"/>
<dbReference type="KEGG" id="rno:29448"/>
<dbReference type="UCSC" id="RGD:61908">
    <property type="organism name" value="rat"/>
</dbReference>
<dbReference type="AGR" id="RGD:61908"/>
<dbReference type="CTD" id="7879"/>
<dbReference type="RGD" id="61908">
    <property type="gene designation" value="Rab7a"/>
</dbReference>
<dbReference type="eggNOG" id="KOG0394">
    <property type="taxonomic scope" value="Eukaryota"/>
</dbReference>
<dbReference type="GeneTree" id="ENSGT00940000155864"/>
<dbReference type="InParanoid" id="P09527"/>
<dbReference type="OMA" id="FSHINSW"/>
<dbReference type="OrthoDB" id="1436450at2759"/>
<dbReference type="PhylomeDB" id="P09527"/>
<dbReference type="TreeFam" id="TF105605"/>
<dbReference type="Reactome" id="R-RNO-2132295">
    <property type="pathway name" value="MHC class II antigen presentation"/>
</dbReference>
<dbReference type="Reactome" id="R-RNO-6798695">
    <property type="pathway name" value="Neutrophil degranulation"/>
</dbReference>
<dbReference type="Reactome" id="R-RNO-8854214">
    <property type="pathway name" value="TBC/RABGAPs"/>
</dbReference>
<dbReference type="Reactome" id="R-RNO-8873719">
    <property type="pathway name" value="RAB geranylgeranylation"/>
</dbReference>
<dbReference type="Reactome" id="R-RNO-8876198">
    <property type="pathway name" value="RAB GEFs exchange GTP for GDP on RABs"/>
</dbReference>
<dbReference type="Reactome" id="R-RNO-9013149">
    <property type="pathway name" value="RAC1 GTPase cycle"/>
</dbReference>
<dbReference type="Reactome" id="R-RNO-9013404">
    <property type="pathway name" value="RAC2 GTPase cycle"/>
</dbReference>
<dbReference type="Reactome" id="R-RNO-9013405">
    <property type="pathway name" value="RHOD GTPase cycle"/>
</dbReference>
<dbReference type="Reactome" id="R-RNO-9013406">
    <property type="pathway name" value="RHOQ GTPase cycle"/>
</dbReference>
<dbReference type="Reactome" id="R-RNO-9013407">
    <property type="pathway name" value="RHOH GTPase cycle"/>
</dbReference>
<dbReference type="Reactome" id="R-RNO-9013408">
    <property type="pathway name" value="RHOG GTPase cycle"/>
</dbReference>
<dbReference type="Reactome" id="R-RNO-9035034">
    <property type="pathway name" value="RHOF GTPase cycle"/>
</dbReference>
<dbReference type="EvolutionaryTrace" id="P09527"/>
<dbReference type="PRO" id="PR:P09527"/>
<dbReference type="Proteomes" id="UP000002494">
    <property type="component" value="Chromosome 4"/>
</dbReference>
<dbReference type="Bgee" id="ENSRNOG00000012247">
    <property type="expression patterns" value="Expressed in lung and 19 other cell types or tissues"/>
</dbReference>
<dbReference type="ExpressionAtlas" id="P09527">
    <property type="expression patterns" value="baseline and differential"/>
</dbReference>
<dbReference type="GO" id="GO:0097208">
    <property type="term" value="C:alveolar lamellar body"/>
    <property type="evidence" value="ECO:0000314"/>
    <property type="project" value="RGD"/>
</dbReference>
<dbReference type="GO" id="GO:0000421">
    <property type="term" value="C:autophagosome membrane"/>
    <property type="evidence" value="ECO:0007669"/>
    <property type="project" value="UniProtKB-SubCell"/>
</dbReference>
<dbReference type="GO" id="GO:0005737">
    <property type="term" value="C:cytoplasm"/>
    <property type="evidence" value="ECO:0000266"/>
    <property type="project" value="RGD"/>
</dbReference>
<dbReference type="GO" id="GO:0005829">
    <property type="term" value="C:cytosol"/>
    <property type="evidence" value="ECO:0000250"/>
    <property type="project" value="GO_Central"/>
</dbReference>
<dbReference type="GO" id="GO:0005768">
    <property type="term" value="C:endosome"/>
    <property type="evidence" value="ECO:0000266"/>
    <property type="project" value="RGD"/>
</dbReference>
<dbReference type="GO" id="GO:0010008">
    <property type="term" value="C:endosome membrane"/>
    <property type="evidence" value="ECO:0000266"/>
    <property type="project" value="RGD"/>
</dbReference>
<dbReference type="GO" id="GO:0070382">
    <property type="term" value="C:exocytic vesicle"/>
    <property type="evidence" value="ECO:0000266"/>
    <property type="project" value="RGD"/>
</dbReference>
<dbReference type="GO" id="GO:0098978">
    <property type="term" value="C:glutamatergic synapse"/>
    <property type="evidence" value="ECO:0000266"/>
    <property type="project" value="RGD"/>
</dbReference>
<dbReference type="GO" id="GO:0005794">
    <property type="term" value="C:Golgi apparatus"/>
    <property type="evidence" value="ECO:0000266"/>
    <property type="project" value="RGD"/>
</dbReference>
<dbReference type="GO" id="GO:0005770">
    <property type="term" value="C:late endosome"/>
    <property type="evidence" value="ECO:0000314"/>
    <property type="project" value="RGD"/>
</dbReference>
<dbReference type="GO" id="GO:0031902">
    <property type="term" value="C:late endosome membrane"/>
    <property type="evidence" value="ECO:0000250"/>
    <property type="project" value="GO_Central"/>
</dbReference>
<dbReference type="GO" id="GO:0005811">
    <property type="term" value="C:lipid droplet"/>
    <property type="evidence" value="ECO:0000250"/>
    <property type="project" value="GO_Central"/>
</dbReference>
<dbReference type="GO" id="GO:0005765">
    <property type="term" value="C:lysosomal membrane"/>
    <property type="evidence" value="ECO:0000266"/>
    <property type="project" value="RGD"/>
</dbReference>
<dbReference type="GO" id="GO:0005764">
    <property type="term" value="C:lysosome"/>
    <property type="evidence" value="ECO:0000266"/>
    <property type="project" value="RGD"/>
</dbReference>
<dbReference type="GO" id="GO:0033162">
    <property type="term" value="C:melanosome membrane"/>
    <property type="evidence" value="ECO:0007669"/>
    <property type="project" value="UniProtKB-SubCell"/>
</dbReference>
<dbReference type="GO" id="GO:0031966">
    <property type="term" value="C:mitochondrial membrane"/>
    <property type="evidence" value="ECO:0007669"/>
    <property type="project" value="UniProtKB-SubCell"/>
</dbReference>
<dbReference type="GO" id="GO:0005739">
    <property type="term" value="C:mitochondrion"/>
    <property type="evidence" value="ECO:0000250"/>
    <property type="project" value="UniProtKB"/>
</dbReference>
<dbReference type="GO" id="GO:0045335">
    <property type="term" value="C:phagocytic vesicle"/>
    <property type="evidence" value="ECO:0000250"/>
    <property type="project" value="UniProtKB"/>
</dbReference>
<dbReference type="GO" id="GO:0030670">
    <property type="term" value="C:phagocytic vesicle membrane"/>
    <property type="evidence" value="ECO:0007669"/>
    <property type="project" value="UniProtKB-SubCell"/>
</dbReference>
<dbReference type="GO" id="GO:0034045">
    <property type="term" value="C:phagophore assembly site membrane"/>
    <property type="evidence" value="ECO:0000266"/>
    <property type="project" value="RGD"/>
</dbReference>
<dbReference type="GO" id="GO:0098830">
    <property type="term" value="C:presynaptic endosome"/>
    <property type="evidence" value="ECO:0000314"/>
    <property type="project" value="SynGO"/>
</dbReference>
<dbReference type="GO" id="GO:0030904">
    <property type="term" value="C:retromer complex"/>
    <property type="evidence" value="ECO:0000266"/>
    <property type="project" value="RGD"/>
</dbReference>
<dbReference type="GO" id="GO:0030672">
    <property type="term" value="C:synaptic vesicle membrane"/>
    <property type="evidence" value="ECO:0000314"/>
    <property type="project" value="SynGO"/>
</dbReference>
<dbReference type="GO" id="GO:0043195">
    <property type="term" value="C:terminal bouton"/>
    <property type="evidence" value="ECO:0007005"/>
    <property type="project" value="ParkinsonsUK-UCL"/>
</dbReference>
<dbReference type="GO" id="GO:0003925">
    <property type="term" value="F:G protein activity"/>
    <property type="evidence" value="ECO:0007669"/>
    <property type="project" value="UniProtKB-EC"/>
</dbReference>
<dbReference type="GO" id="GO:0019003">
    <property type="term" value="F:GDP binding"/>
    <property type="evidence" value="ECO:0000314"/>
    <property type="project" value="RGD"/>
</dbReference>
<dbReference type="GO" id="GO:0005525">
    <property type="term" value="F:GTP binding"/>
    <property type="evidence" value="ECO:0000314"/>
    <property type="project" value="RGD"/>
</dbReference>
<dbReference type="GO" id="GO:0003924">
    <property type="term" value="F:GTPase activity"/>
    <property type="evidence" value="ECO:0000266"/>
    <property type="project" value="RGD"/>
</dbReference>
<dbReference type="GO" id="GO:1905394">
    <property type="term" value="F:retromer complex binding"/>
    <property type="evidence" value="ECO:0000266"/>
    <property type="project" value="RGD"/>
</dbReference>
<dbReference type="GO" id="GO:0031267">
    <property type="term" value="F:small GTPase binding"/>
    <property type="evidence" value="ECO:0000353"/>
    <property type="project" value="RGD"/>
</dbReference>
<dbReference type="GO" id="GO:0000045">
    <property type="term" value="P:autophagosome assembly"/>
    <property type="evidence" value="ECO:0000266"/>
    <property type="project" value="RGD"/>
</dbReference>
<dbReference type="GO" id="GO:0045453">
    <property type="term" value="P:bone resorption"/>
    <property type="evidence" value="ECO:0000315"/>
    <property type="project" value="RGD"/>
</dbReference>
<dbReference type="GO" id="GO:0045022">
    <property type="term" value="P:early endosome to late endosome transport"/>
    <property type="evidence" value="ECO:0000250"/>
    <property type="project" value="UniProtKB"/>
</dbReference>
<dbReference type="GO" id="GO:0008333">
    <property type="term" value="P:endosome to lysosome transport"/>
    <property type="evidence" value="ECO:0000266"/>
    <property type="project" value="RGD"/>
</dbReference>
<dbReference type="GO" id="GO:0099638">
    <property type="term" value="P:endosome to plasma membrane protein transport"/>
    <property type="evidence" value="ECO:0000250"/>
    <property type="project" value="UniProtKB"/>
</dbReference>
<dbReference type="GO" id="GO:0007174">
    <property type="term" value="P:epidermal growth factor catabolic process"/>
    <property type="evidence" value="ECO:0000266"/>
    <property type="project" value="RGD"/>
</dbReference>
<dbReference type="GO" id="GO:0051650">
    <property type="term" value="P:establishment of vesicle localization"/>
    <property type="evidence" value="ECO:0000266"/>
    <property type="project" value="RGD"/>
</dbReference>
<dbReference type="GO" id="GO:0046907">
    <property type="term" value="P:intracellular transport"/>
    <property type="evidence" value="ECO:0000266"/>
    <property type="project" value="RGD"/>
</dbReference>
<dbReference type="GO" id="GO:0016042">
    <property type="term" value="P:lipid catabolic process"/>
    <property type="evidence" value="ECO:0007669"/>
    <property type="project" value="UniProtKB-KW"/>
</dbReference>
<dbReference type="GO" id="GO:0061724">
    <property type="term" value="P:lipophagy"/>
    <property type="evidence" value="ECO:0000250"/>
    <property type="project" value="GO_Central"/>
</dbReference>
<dbReference type="GO" id="GO:1903542">
    <property type="term" value="P:negative regulation of exosomal secretion"/>
    <property type="evidence" value="ECO:0000266"/>
    <property type="project" value="RGD"/>
</dbReference>
<dbReference type="GO" id="GO:0098943">
    <property type="term" value="P:neurotransmitter receptor transport, postsynaptic endosome to lysosome"/>
    <property type="evidence" value="ECO:0000266"/>
    <property type="project" value="RGD"/>
</dbReference>
<dbReference type="GO" id="GO:0090383">
    <property type="term" value="P:phagosome acidification"/>
    <property type="evidence" value="ECO:0000250"/>
    <property type="project" value="UniProtKB"/>
</dbReference>
<dbReference type="GO" id="GO:0090385">
    <property type="term" value="P:phagosome-lysosome fusion"/>
    <property type="evidence" value="ECO:0000250"/>
    <property type="project" value="UniProtKB"/>
</dbReference>
<dbReference type="GO" id="GO:1903543">
    <property type="term" value="P:positive regulation of exosomal secretion"/>
    <property type="evidence" value="ECO:0000266"/>
    <property type="project" value="RGD"/>
</dbReference>
<dbReference type="GO" id="GO:0045732">
    <property type="term" value="P:positive regulation of protein catabolic process"/>
    <property type="evidence" value="ECO:0000266"/>
    <property type="project" value="RGD"/>
</dbReference>
<dbReference type="GO" id="GO:0048524">
    <property type="term" value="P:positive regulation of viral process"/>
    <property type="evidence" value="ECO:0000266"/>
    <property type="project" value="RGD"/>
</dbReference>
<dbReference type="GO" id="GO:0006622">
    <property type="term" value="P:protein targeting to lysosome"/>
    <property type="evidence" value="ECO:0000266"/>
    <property type="project" value="RGD"/>
</dbReference>
<dbReference type="GO" id="GO:0022615">
    <property type="term" value="P:protein to membrane docking"/>
    <property type="evidence" value="ECO:0000266"/>
    <property type="project" value="RGD"/>
</dbReference>
<dbReference type="GO" id="GO:0009617">
    <property type="term" value="P:response to bacterium"/>
    <property type="evidence" value="ECO:0000266"/>
    <property type="project" value="RGD"/>
</dbReference>
<dbReference type="GO" id="GO:0042147">
    <property type="term" value="P:retrograde transport, endosome to Golgi"/>
    <property type="evidence" value="ECO:0000266"/>
    <property type="project" value="RGD"/>
</dbReference>
<dbReference type="GO" id="GO:0036466">
    <property type="term" value="P:synaptic vesicle recycling via endosome"/>
    <property type="evidence" value="ECO:0000314"/>
    <property type="project" value="SynGO"/>
</dbReference>
<dbReference type="GO" id="GO:0099003">
    <property type="term" value="P:vesicle-mediated transport in synapse"/>
    <property type="evidence" value="ECO:0000266"/>
    <property type="project" value="RGD"/>
</dbReference>
<dbReference type="GO" id="GO:0019076">
    <property type="term" value="P:viral release from host cell"/>
    <property type="evidence" value="ECO:0000266"/>
    <property type="project" value="RGD"/>
</dbReference>
<dbReference type="CDD" id="cd01862">
    <property type="entry name" value="Rab7"/>
    <property type="match status" value="1"/>
</dbReference>
<dbReference type="FunFam" id="3.40.50.300:FF:000086">
    <property type="entry name" value="Ras-related small GTPase"/>
    <property type="match status" value="1"/>
</dbReference>
<dbReference type="Gene3D" id="3.40.50.300">
    <property type="entry name" value="P-loop containing nucleotide triphosphate hydrolases"/>
    <property type="match status" value="1"/>
</dbReference>
<dbReference type="InterPro" id="IPR027417">
    <property type="entry name" value="P-loop_NTPase"/>
</dbReference>
<dbReference type="InterPro" id="IPR005225">
    <property type="entry name" value="Small_GTP-bd"/>
</dbReference>
<dbReference type="InterPro" id="IPR001806">
    <property type="entry name" value="Small_GTPase"/>
</dbReference>
<dbReference type="NCBIfam" id="TIGR00231">
    <property type="entry name" value="small_GTP"/>
    <property type="match status" value="1"/>
</dbReference>
<dbReference type="PANTHER" id="PTHR47981">
    <property type="entry name" value="RAB FAMILY"/>
    <property type="match status" value="1"/>
</dbReference>
<dbReference type="PANTHER" id="PTHR47981:SF13">
    <property type="entry name" value="RAS-RELATED PROTEIN RAB-7A"/>
    <property type="match status" value="1"/>
</dbReference>
<dbReference type="Pfam" id="PF00071">
    <property type="entry name" value="Ras"/>
    <property type="match status" value="1"/>
</dbReference>
<dbReference type="PRINTS" id="PR00449">
    <property type="entry name" value="RASTRNSFRMNG"/>
</dbReference>
<dbReference type="SMART" id="SM00175">
    <property type="entry name" value="RAB"/>
    <property type="match status" value="1"/>
</dbReference>
<dbReference type="SMART" id="SM00176">
    <property type="entry name" value="RAN"/>
    <property type="match status" value="1"/>
</dbReference>
<dbReference type="SMART" id="SM00173">
    <property type="entry name" value="RAS"/>
    <property type="match status" value="1"/>
</dbReference>
<dbReference type="SMART" id="SM00174">
    <property type="entry name" value="RHO"/>
    <property type="match status" value="1"/>
</dbReference>
<dbReference type="SUPFAM" id="SSF52540">
    <property type="entry name" value="P-loop containing nucleoside triphosphate hydrolases"/>
    <property type="match status" value="1"/>
</dbReference>
<dbReference type="PROSITE" id="PS51419">
    <property type="entry name" value="RAB"/>
    <property type="match status" value="1"/>
</dbReference>
<gene>
    <name evidence="9" type="primary">Rab7a</name>
    <name type="synonym">Rab7</name>
</gene>
<organism>
    <name type="scientific">Rattus norvegicus</name>
    <name type="common">Rat</name>
    <dbReference type="NCBI Taxonomy" id="10116"/>
    <lineage>
        <taxon>Eukaryota</taxon>
        <taxon>Metazoa</taxon>
        <taxon>Chordata</taxon>
        <taxon>Craniata</taxon>
        <taxon>Vertebrata</taxon>
        <taxon>Euteleostomi</taxon>
        <taxon>Mammalia</taxon>
        <taxon>Eutheria</taxon>
        <taxon>Euarchontoglires</taxon>
        <taxon>Glires</taxon>
        <taxon>Rodentia</taxon>
        <taxon>Myomorpha</taxon>
        <taxon>Muroidea</taxon>
        <taxon>Muridae</taxon>
        <taxon>Murinae</taxon>
        <taxon>Rattus</taxon>
    </lineage>
</organism>
<comment type="function">
    <text evidence="2 3 5 6">The small GTPases Rab are key regulators of intracellular membrane trafficking, from the formation of transport vesicles to their fusion with membranes. Rabs cycle between an inactive GDP-bound form and an active GTP-bound form that is able to recruit to membranes different sets of downstream effectors directly responsible for vesicle formation, movement, tethering and fusion. In its active state, RAB7A binds to a variety of effector proteins playing a key role in the regulation of endo-lysosomal trafficking. Governs early-to-late endosomal maturation, microtubule minus-end as well as plus-end directed endosomal migration and positioning, and endosome-lysosome transport through different protein-protein interaction cascades (By similarity). Also plays a central role in growth-factor-mediated cell signaling, nutrient-transporter-mediated nutrient uptake, neurotrophin transport in the axons of neurons and lipid metabolism (By similarity). Also involved in regulation of some specialized endosomal membrane trafficking, such as maturation of melanosomes, pathogen-induced phagosomes (or vacuoles) and autophagosomes (By similarity). Plays a role in the maturation and acidification of phagosomes that engulf pathogens, such as S.aureus and Mycobacteria (By similarity). Plays a role in the fusion of phagosomes with lysosomes (By similarity). In concert with RAC1, plays a role in regulating the formation of RBs (ruffled borders) in osteoclasts (PubMed:16040606). Controls the endosomal trafficking and neurite outgrowth signaling of NTRK1/TRKA (PubMed:16306406). Regulates the endocytic trafficking of the EGF-EGFR complex by regulating its lysosomal degradation (By similarity). Involved in the ADRB2-stimulated lipolysis through lipophagy, a cytosolic lipase-independent autophagic pathway. Required for the exosomal release of SDCBP, CD63 and syndecan (By similarity). Required for vesicular trafficking and cell surface expression of ACE2 (By similarity). May play a role in PRPH neuronal intermediate filament assembly (By similarity).</text>
</comment>
<comment type="catalytic activity">
    <reaction evidence="2">
        <text>GTP + H2O = GDP + phosphate + H(+)</text>
        <dbReference type="Rhea" id="RHEA:19669"/>
        <dbReference type="ChEBI" id="CHEBI:15377"/>
        <dbReference type="ChEBI" id="CHEBI:15378"/>
        <dbReference type="ChEBI" id="CHEBI:37565"/>
        <dbReference type="ChEBI" id="CHEBI:43474"/>
        <dbReference type="ChEBI" id="CHEBI:58189"/>
        <dbReference type="EC" id="3.6.5.2"/>
    </reaction>
    <physiologicalReaction direction="left-to-right" evidence="2">
        <dbReference type="Rhea" id="RHEA:19670"/>
    </physiologicalReaction>
</comment>
<comment type="cofactor">
    <cofactor evidence="2">
        <name>Mg(2+)</name>
        <dbReference type="ChEBI" id="CHEBI:18420"/>
    </cofactor>
</comment>
<comment type="activity regulation">
    <text evidence="2">Regulated by guanine nucleotide exchange factors (GEFs) which promote the exchange of bound GDP for free GTP. Regulated by GTPase activating proteins (GAPs) which increase the GTP hydrolysis activity. Inhibited by GDP dissociation inhibitors (GDIs).</text>
</comment>
<comment type="subunit">
    <text evidence="2 3 4 5 6 7">Interacts with NTRK1/TRKA (PubMed:16306406). Interacts with RILP (By similarity). Interacts with PSMA7 (By similarity). Interacts with RNF115 (By similarity). Interacts with and FYCO1 (By similarity). Interacts with the PIK3C3/VPS34-PIK3R4 complex (By similarity). The GTP-bound form interacts with OSBPL1A (By similarity). The GTP-bound form interacts with RAC1 (PubMed:16040606). Interacts with CLN3 (By similarity). Interacts with CHM, the substrate-binding subunit of the Rab geranylgeranyltransferase complex (PubMed:15186776, PubMed:18756270). Interacts with C9orf72 (By similarity). Does not interact with HPS4 and the BLOC-3 complex (heterodimer of HPS1 and HPS4). Interacts with CLN5 (By similarity). Interacts with PLEKHM1 (via N- and C-terminus) (By similarity). Interacts with PRPH; the interaction is direct (By similarity). Interacts with VPS13A (By similarity). The GDP-bound form interacts with RIMOC1 (By similarity). Interacts with the MON1A-CCZ1B complex and this interaction is enhanced in the presence of RIMOC1 (By similarity). Interacts with VPS39 and VPS41 (By similarity). Forms a ternary complex with LAMP2 and RUFY4; the interaction with LAMP2 is mediated by RUFY4 (via RUN and coiled coil domains) (By similarity).</text>
</comment>
<comment type="interaction">
    <interactant intactId="EBI-916225">
        <id>P09527</id>
    </interactant>
    <interactant intactId="EBI-1039231">
        <id>P37727</id>
        <label>Chm</label>
    </interactant>
    <organismsDiffer>false</organismsDiffer>
    <experiments>2</experiments>
</comment>
<comment type="subcellular location">
    <subcellularLocation>
        <location evidence="2">Cytoplasmic vesicle</location>
        <location evidence="2">Phagosome membrane</location>
        <topology evidence="8">Peripheral membrane protein</topology>
        <orientation evidence="8">Cytoplasmic side</orientation>
    </subcellularLocation>
    <subcellularLocation>
        <location evidence="5">Late endosome membrane</location>
        <topology evidence="8">Peripheral membrane protein</topology>
        <orientation evidence="8">Cytoplasmic side</orientation>
    </subcellularLocation>
    <subcellularLocation>
        <location evidence="5">Lysosome membrane</location>
        <topology evidence="8">Peripheral membrane protein</topology>
        <orientation evidence="8">Cytoplasmic side</orientation>
    </subcellularLocation>
    <subcellularLocation>
        <location evidence="2">Melanosome membrane</location>
        <topology evidence="8">Peripheral membrane protein</topology>
        <orientation evidence="8">Cytoplasmic side</orientation>
    </subcellularLocation>
    <subcellularLocation>
        <location evidence="2">Cytoplasmic vesicle</location>
        <location evidence="2">Autophagosome membrane</location>
        <topology evidence="8">Peripheral membrane protein</topology>
        <orientation evidence="8">Cytoplasmic side</orientation>
    </subcellularLocation>
    <subcellularLocation>
        <location evidence="3">Lipid droplet</location>
    </subcellularLocation>
    <subcellularLocation>
        <location evidence="2">Endosome membrane</location>
    </subcellularLocation>
    <subcellularLocation>
        <location evidence="3">Cytoplasmic vesicle</location>
    </subcellularLocation>
    <subcellularLocation>
        <location evidence="2">Mitochondrion membrane</location>
        <topology evidence="8">Peripheral membrane protein</topology>
    </subcellularLocation>
    <text evidence="2 3">Colocalizes with OSBPL1A at the late endosome. Found in the ruffled border (a late endosomal-like compartment in the plasma membrane) of bone-resorbing osteoclasts. Recruited to phagosomes containing S.aureus or Mycobacterium. Lipid droplet localization is increased upon ADRB2 stimulation. Recruited to damaged mitochondria during mitophagy in a RIMOC1-dependent manner.</text>
</comment>
<comment type="tissue specificity">
    <text evidence="5 6">Expressed in osteoclasts and in neurons.</text>
</comment>
<comment type="domain">
    <text evidence="2">Switch I, switch II and the interswitch regions are characteristic of Rab GTPases and mediate the interactions with Rab downstream effectors. The switch regions undergo conformational changes upon nucleotide binding which drive interaction with specific sets of effector proteins, with most effectors only binding to GTP-bound Rab.</text>
</comment>
<comment type="PTM">
    <text evidence="2">Deubiquitination at Lys-191 and Lys-194 by USP32.</text>
</comment>
<comment type="PTM">
    <text evidence="2">Phosphorylated at Ser-72 by LRRK1; phosphorylation is dependent on protein kinase C (PKC) activation of LRRK1.</text>
</comment>
<comment type="PTM">
    <text evidence="2">Prenylated. Prenylation is required for association with cellular membranes.</text>
</comment>
<comment type="similarity">
    <text evidence="8">Belongs to the small GTPase superfamily. Rab family.</text>
</comment>
<proteinExistence type="evidence at protein level"/>
<sequence>MTSRKKVLLKVIILGDSGVGKTSLMNQYVNKKFSNQYKATIGADFLTKEVMVDDRLVTMQIWDTAGQERFQSLGVAFYRGADCCVLVFDVTAPNTFKTLDSWRDEFLIQASPRDPENFPFVVLGNKIDLENRQVATKRAQAWCYSKNNIPYFETSAKEAINVEQAFQTIARNALKQETEVELYNEFPEPIKLDKNERAKASAESCSC</sequence>
<feature type="initiator methionine" description="Removed" evidence="2">
    <location>
        <position position="1"/>
    </location>
</feature>
<feature type="chain" id="PRO_0000121124" description="Ras-related protein Rab-7a">
    <location>
        <begin position="2"/>
        <end position="207"/>
    </location>
</feature>
<feature type="short sequence motif" description="Switch 1" evidence="2">
    <location>
        <begin position="28"/>
        <end position="41"/>
    </location>
</feature>
<feature type="short sequence motif" description="Switch 2" evidence="2">
    <location>
        <begin position="67"/>
        <end position="82"/>
    </location>
</feature>
<feature type="binding site" evidence="2">
    <location>
        <position position="17"/>
    </location>
    <ligand>
        <name>GTP</name>
        <dbReference type="ChEBI" id="CHEBI:37565"/>
    </ligand>
</feature>
<feature type="binding site" evidence="2">
    <location>
        <position position="18"/>
    </location>
    <ligand>
        <name>GTP</name>
        <dbReference type="ChEBI" id="CHEBI:37565"/>
    </ligand>
</feature>
<feature type="binding site" evidence="2">
    <location>
        <position position="19"/>
    </location>
    <ligand>
        <name>GTP</name>
        <dbReference type="ChEBI" id="CHEBI:37565"/>
    </ligand>
</feature>
<feature type="binding site" evidence="2">
    <location>
        <position position="20"/>
    </location>
    <ligand>
        <name>GTP</name>
        <dbReference type="ChEBI" id="CHEBI:37565"/>
    </ligand>
</feature>
<feature type="binding site" evidence="2">
    <location>
        <position position="21"/>
    </location>
    <ligand>
        <name>GTP</name>
        <dbReference type="ChEBI" id="CHEBI:37565"/>
    </ligand>
</feature>
<feature type="binding site" evidence="2">
    <location>
        <position position="22"/>
    </location>
    <ligand>
        <name>GTP</name>
        <dbReference type="ChEBI" id="CHEBI:37565"/>
    </ligand>
</feature>
<feature type="binding site" evidence="2">
    <location>
        <position position="22"/>
    </location>
    <ligand>
        <name>Mg(2+)</name>
        <dbReference type="ChEBI" id="CHEBI:18420"/>
    </ligand>
</feature>
<feature type="binding site" evidence="2">
    <location>
        <position position="23"/>
    </location>
    <ligand>
        <name>GTP</name>
        <dbReference type="ChEBI" id="CHEBI:37565"/>
    </ligand>
</feature>
<feature type="binding site" evidence="2">
    <location>
        <position position="34"/>
    </location>
    <ligand>
        <name>GTP</name>
        <dbReference type="ChEBI" id="CHEBI:37565"/>
    </ligand>
</feature>
<feature type="binding site" evidence="2">
    <location>
        <position position="35"/>
    </location>
    <ligand>
        <name>GTP</name>
        <dbReference type="ChEBI" id="CHEBI:37565"/>
    </ligand>
</feature>
<feature type="binding site" evidence="2">
    <location>
        <position position="37"/>
    </location>
    <ligand>
        <name>GTP</name>
        <dbReference type="ChEBI" id="CHEBI:37565"/>
    </ligand>
</feature>
<feature type="binding site" evidence="2">
    <location>
        <position position="40"/>
    </location>
    <ligand>
        <name>GTP</name>
        <dbReference type="ChEBI" id="CHEBI:37565"/>
    </ligand>
</feature>
<feature type="binding site" evidence="2">
    <location>
        <position position="40"/>
    </location>
    <ligand>
        <name>Mg(2+)</name>
        <dbReference type="ChEBI" id="CHEBI:18420"/>
    </ligand>
</feature>
<feature type="binding site" evidence="2">
    <location>
        <position position="63"/>
    </location>
    <ligand>
        <name>Mg(2+)</name>
        <dbReference type="ChEBI" id="CHEBI:18420"/>
    </ligand>
</feature>
<feature type="binding site" evidence="2">
    <location>
        <position position="66"/>
    </location>
    <ligand>
        <name>GTP</name>
        <dbReference type="ChEBI" id="CHEBI:37565"/>
    </ligand>
</feature>
<feature type="binding site" evidence="2">
    <location>
        <position position="125"/>
    </location>
    <ligand>
        <name>GTP</name>
        <dbReference type="ChEBI" id="CHEBI:37565"/>
    </ligand>
</feature>
<feature type="binding site" evidence="2">
    <location>
        <position position="126"/>
    </location>
    <ligand>
        <name>GTP</name>
        <dbReference type="ChEBI" id="CHEBI:37565"/>
    </ligand>
</feature>
<feature type="binding site" evidence="2">
    <location>
        <position position="128"/>
    </location>
    <ligand>
        <name>GTP</name>
        <dbReference type="ChEBI" id="CHEBI:37565"/>
    </ligand>
</feature>
<feature type="binding site" evidence="2">
    <location>
        <position position="156"/>
    </location>
    <ligand>
        <name>GTP</name>
        <dbReference type="ChEBI" id="CHEBI:37565"/>
    </ligand>
</feature>
<feature type="binding site" evidence="2">
    <location>
        <position position="157"/>
    </location>
    <ligand>
        <name>GTP</name>
        <dbReference type="ChEBI" id="CHEBI:37565"/>
    </ligand>
</feature>
<feature type="modified residue" description="N-acetylthreonine" evidence="2">
    <location>
        <position position="2"/>
    </location>
</feature>
<feature type="modified residue" description="Phosphoserine" evidence="10">
    <location>
        <position position="72"/>
    </location>
</feature>
<feature type="modified residue" description="Cysteine methyl ester" evidence="1">
    <location>
        <position position="207"/>
    </location>
</feature>
<feature type="lipid moiety-binding region" description="S-geranylgeranyl cysteine" evidence="1">
    <location>
        <position position="205"/>
    </location>
</feature>
<feature type="lipid moiety-binding region" description="S-geranylgeranyl cysteine" evidence="1">
    <location>
        <position position="207"/>
    </location>
</feature>
<feature type="cross-link" description="Glycyl lysine isopeptide (Lys-Gly) (interchain with G-Cter in ubiquitin)" evidence="2">
    <location>
        <position position="191"/>
    </location>
</feature>
<feature type="cross-link" description="Glycyl lysine isopeptide (Lys-Gly) (interchain with G-Cter in ubiquitin)" evidence="2">
    <location>
        <position position="194"/>
    </location>
</feature>
<feature type="strand" evidence="12">
    <location>
        <begin position="8"/>
        <end position="14"/>
    </location>
</feature>
<feature type="helix" evidence="12">
    <location>
        <begin position="21"/>
        <end position="30"/>
    </location>
</feature>
<feature type="strand" evidence="12">
    <location>
        <begin position="42"/>
        <end position="54"/>
    </location>
</feature>
<feature type="strand" evidence="12">
    <location>
        <begin position="56"/>
        <end position="64"/>
    </location>
</feature>
<feature type="helix" evidence="12">
    <location>
        <begin position="68"/>
        <end position="70"/>
    </location>
</feature>
<feature type="helix" evidence="12">
    <location>
        <begin position="76"/>
        <end position="78"/>
    </location>
</feature>
<feature type="strand" evidence="12">
    <location>
        <begin position="82"/>
        <end position="89"/>
    </location>
</feature>
<feature type="helix" evidence="12">
    <location>
        <begin position="93"/>
        <end position="97"/>
    </location>
</feature>
<feature type="helix" evidence="12">
    <location>
        <begin position="99"/>
        <end position="110"/>
    </location>
</feature>
<feature type="helix" evidence="12">
    <location>
        <begin position="115"/>
        <end position="117"/>
    </location>
</feature>
<feature type="strand" evidence="12">
    <location>
        <begin position="120"/>
        <end position="125"/>
    </location>
</feature>
<feature type="strand" evidence="11">
    <location>
        <begin position="129"/>
        <end position="131"/>
    </location>
</feature>
<feature type="helix" evidence="12">
    <location>
        <begin position="136"/>
        <end position="145"/>
    </location>
</feature>
<feature type="strand" evidence="12">
    <location>
        <begin position="151"/>
        <end position="153"/>
    </location>
</feature>
<feature type="turn" evidence="12">
    <location>
        <begin position="156"/>
        <end position="159"/>
    </location>
</feature>
<feature type="helix" evidence="12">
    <location>
        <begin position="162"/>
        <end position="185"/>
    </location>
</feature>
<keyword id="KW-0002">3D-structure</keyword>
<keyword id="KW-0007">Acetylation</keyword>
<keyword id="KW-0072">Autophagy</keyword>
<keyword id="KW-0968">Cytoplasmic vesicle</keyword>
<keyword id="KW-0967">Endosome</keyword>
<keyword id="KW-0342">GTP-binding</keyword>
<keyword id="KW-0378">Hydrolase</keyword>
<keyword id="KW-1017">Isopeptide bond</keyword>
<keyword id="KW-0442">Lipid degradation</keyword>
<keyword id="KW-0551">Lipid droplet</keyword>
<keyword id="KW-0443">Lipid metabolism</keyword>
<keyword id="KW-0449">Lipoprotein</keyword>
<keyword id="KW-0458">Lysosome</keyword>
<keyword id="KW-0460">Magnesium</keyword>
<keyword id="KW-0472">Membrane</keyword>
<keyword id="KW-0479">Metal-binding</keyword>
<keyword id="KW-0488">Methylation</keyword>
<keyword id="KW-0496">Mitochondrion</keyword>
<keyword id="KW-0547">Nucleotide-binding</keyword>
<keyword id="KW-0597">Phosphoprotein</keyword>
<keyword id="KW-0636">Prenylation</keyword>
<keyword id="KW-0653">Protein transport</keyword>
<keyword id="KW-1185">Reference proteome</keyword>
<keyword id="KW-0813">Transport</keyword>
<keyword id="KW-0832">Ubl conjugation</keyword>
<name>RAB7A_RAT</name>
<accession>P09527</accession>
<accession>Q4AEF6</accession>
<evidence type="ECO:0000250" key="1"/>
<evidence type="ECO:0000250" key="2">
    <source>
        <dbReference type="UniProtKB" id="P51149"/>
    </source>
</evidence>
<evidence type="ECO:0000250" key="3">
    <source>
        <dbReference type="UniProtKB" id="P51150"/>
    </source>
</evidence>
<evidence type="ECO:0000269" key="4">
    <source>
    </source>
</evidence>
<evidence type="ECO:0000269" key="5">
    <source>
    </source>
</evidence>
<evidence type="ECO:0000269" key="6">
    <source>
    </source>
</evidence>
<evidence type="ECO:0000269" key="7">
    <source>
    </source>
</evidence>
<evidence type="ECO:0000305" key="8"/>
<evidence type="ECO:0000312" key="9">
    <source>
        <dbReference type="RGD" id="61908"/>
    </source>
</evidence>
<evidence type="ECO:0007744" key="10">
    <source>
    </source>
</evidence>
<evidence type="ECO:0007829" key="11">
    <source>
        <dbReference type="PDB" id="1VG1"/>
    </source>
</evidence>
<evidence type="ECO:0007829" key="12">
    <source>
        <dbReference type="PDB" id="1VG8"/>
    </source>
</evidence>